<sequence length="267" mass="28018">MSRISDRFASLKERGEKALVTFVTAGDPDLATTEKVVLELERAGADLVELGVPFSDPMADGPTIQLSSDRALASGTTLPAILELVSRLREKTQVPIVLMGYFNPIFAYGSERFAFDAAQAGVDALLVVDLPPEEAAELKGATDSCGLDLIFLLTPTSDSSRVAMVARQGSGFIYYVSVTGVTGARSAVADDLAARVTEVRGALELPLVVGFGISTPEQAGEVAQAADGVVVGSALVKYFEKYQGAELLEQLGGFVSALKQGVLKGSR</sequence>
<comment type="function">
    <text evidence="1">The alpha subunit is responsible for the aldol cleavage of indoleglycerol phosphate to indole and glyceraldehyde 3-phosphate.</text>
</comment>
<comment type="catalytic activity">
    <reaction evidence="1">
        <text>(1S,2R)-1-C-(indol-3-yl)glycerol 3-phosphate + L-serine = D-glyceraldehyde 3-phosphate + L-tryptophan + H2O</text>
        <dbReference type="Rhea" id="RHEA:10532"/>
        <dbReference type="ChEBI" id="CHEBI:15377"/>
        <dbReference type="ChEBI" id="CHEBI:33384"/>
        <dbReference type="ChEBI" id="CHEBI:57912"/>
        <dbReference type="ChEBI" id="CHEBI:58866"/>
        <dbReference type="ChEBI" id="CHEBI:59776"/>
        <dbReference type="EC" id="4.2.1.20"/>
    </reaction>
</comment>
<comment type="pathway">
    <text evidence="1">Amino-acid biosynthesis; L-tryptophan biosynthesis; L-tryptophan from chorismate: step 5/5.</text>
</comment>
<comment type="subunit">
    <text evidence="1">Tetramer of two alpha and two beta chains.</text>
</comment>
<comment type="similarity">
    <text evidence="1">Belongs to the TrpA family.</text>
</comment>
<keyword id="KW-0028">Amino-acid biosynthesis</keyword>
<keyword id="KW-0057">Aromatic amino acid biosynthesis</keyword>
<keyword id="KW-0456">Lyase</keyword>
<keyword id="KW-0822">Tryptophan biosynthesis</keyword>
<feature type="chain" id="PRO_1000203183" description="Tryptophan synthase alpha chain">
    <location>
        <begin position="1"/>
        <end position="267"/>
    </location>
</feature>
<feature type="active site" description="Proton acceptor" evidence="1">
    <location>
        <position position="49"/>
    </location>
</feature>
<feature type="active site" description="Proton acceptor" evidence="1">
    <location>
        <position position="60"/>
    </location>
</feature>
<evidence type="ECO:0000255" key="1">
    <source>
        <dbReference type="HAMAP-Rule" id="MF_00131"/>
    </source>
</evidence>
<name>TRPA_GEOSM</name>
<reference key="1">
    <citation type="submission" date="2009-07" db="EMBL/GenBank/DDBJ databases">
        <title>Complete sequence of Geobacter sp. M21.</title>
        <authorList>
            <consortium name="US DOE Joint Genome Institute"/>
            <person name="Lucas S."/>
            <person name="Copeland A."/>
            <person name="Lapidus A."/>
            <person name="Glavina del Rio T."/>
            <person name="Dalin E."/>
            <person name="Tice H."/>
            <person name="Bruce D."/>
            <person name="Goodwin L."/>
            <person name="Pitluck S."/>
            <person name="Saunders E."/>
            <person name="Brettin T."/>
            <person name="Detter J.C."/>
            <person name="Han C."/>
            <person name="Larimer F."/>
            <person name="Land M."/>
            <person name="Hauser L."/>
            <person name="Kyrpides N."/>
            <person name="Ovchinnikova G."/>
            <person name="Lovley D."/>
        </authorList>
    </citation>
    <scope>NUCLEOTIDE SEQUENCE [LARGE SCALE GENOMIC DNA]</scope>
    <source>
        <strain>M21</strain>
    </source>
</reference>
<dbReference type="EC" id="4.2.1.20" evidence="1"/>
<dbReference type="EMBL" id="CP001661">
    <property type="protein sequence ID" value="ACT16962.1"/>
    <property type="molecule type" value="Genomic_DNA"/>
</dbReference>
<dbReference type="SMR" id="C6E1P3"/>
<dbReference type="STRING" id="443144.GM21_0895"/>
<dbReference type="KEGG" id="gem:GM21_0895"/>
<dbReference type="eggNOG" id="COG0159">
    <property type="taxonomic scope" value="Bacteria"/>
</dbReference>
<dbReference type="HOGENOM" id="CLU_016734_0_4_7"/>
<dbReference type="OrthoDB" id="9804578at2"/>
<dbReference type="UniPathway" id="UPA00035">
    <property type="reaction ID" value="UER00044"/>
</dbReference>
<dbReference type="GO" id="GO:0005829">
    <property type="term" value="C:cytosol"/>
    <property type="evidence" value="ECO:0007669"/>
    <property type="project" value="TreeGrafter"/>
</dbReference>
<dbReference type="GO" id="GO:0004834">
    <property type="term" value="F:tryptophan synthase activity"/>
    <property type="evidence" value="ECO:0007669"/>
    <property type="project" value="UniProtKB-UniRule"/>
</dbReference>
<dbReference type="CDD" id="cd04724">
    <property type="entry name" value="Tryptophan_synthase_alpha"/>
    <property type="match status" value="1"/>
</dbReference>
<dbReference type="FunFam" id="3.20.20.70:FF:000037">
    <property type="entry name" value="Tryptophan synthase alpha chain"/>
    <property type="match status" value="1"/>
</dbReference>
<dbReference type="Gene3D" id="3.20.20.70">
    <property type="entry name" value="Aldolase class I"/>
    <property type="match status" value="1"/>
</dbReference>
<dbReference type="HAMAP" id="MF_00131">
    <property type="entry name" value="Trp_synth_alpha"/>
    <property type="match status" value="1"/>
</dbReference>
<dbReference type="InterPro" id="IPR013785">
    <property type="entry name" value="Aldolase_TIM"/>
</dbReference>
<dbReference type="InterPro" id="IPR011060">
    <property type="entry name" value="RibuloseP-bd_barrel"/>
</dbReference>
<dbReference type="InterPro" id="IPR018204">
    <property type="entry name" value="Trp_synthase_alpha_AS"/>
</dbReference>
<dbReference type="InterPro" id="IPR002028">
    <property type="entry name" value="Trp_synthase_suA"/>
</dbReference>
<dbReference type="NCBIfam" id="TIGR00262">
    <property type="entry name" value="trpA"/>
    <property type="match status" value="1"/>
</dbReference>
<dbReference type="PANTHER" id="PTHR43406:SF1">
    <property type="entry name" value="TRYPTOPHAN SYNTHASE ALPHA CHAIN, CHLOROPLASTIC"/>
    <property type="match status" value="1"/>
</dbReference>
<dbReference type="PANTHER" id="PTHR43406">
    <property type="entry name" value="TRYPTOPHAN SYNTHASE, ALPHA CHAIN"/>
    <property type="match status" value="1"/>
</dbReference>
<dbReference type="Pfam" id="PF00290">
    <property type="entry name" value="Trp_syntA"/>
    <property type="match status" value="1"/>
</dbReference>
<dbReference type="SUPFAM" id="SSF51366">
    <property type="entry name" value="Ribulose-phoshate binding barrel"/>
    <property type="match status" value="1"/>
</dbReference>
<dbReference type="PROSITE" id="PS00167">
    <property type="entry name" value="TRP_SYNTHASE_ALPHA"/>
    <property type="match status" value="1"/>
</dbReference>
<organism>
    <name type="scientific">Geobacter sp. (strain M21)</name>
    <dbReference type="NCBI Taxonomy" id="443144"/>
    <lineage>
        <taxon>Bacteria</taxon>
        <taxon>Pseudomonadati</taxon>
        <taxon>Thermodesulfobacteriota</taxon>
        <taxon>Desulfuromonadia</taxon>
        <taxon>Geobacterales</taxon>
        <taxon>Geobacteraceae</taxon>
        <taxon>Geobacter</taxon>
    </lineage>
</organism>
<gene>
    <name evidence="1" type="primary">trpA</name>
    <name type="ordered locus">GM21_0895</name>
</gene>
<accession>C6E1P3</accession>
<proteinExistence type="inferred from homology"/>
<protein>
    <recommendedName>
        <fullName evidence="1">Tryptophan synthase alpha chain</fullName>
        <ecNumber evidence="1">4.2.1.20</ecNumber>
    </recommendedName>
</protein>